<name>GATA_OENOB</name>
<accession>Q04DD1</accession>
<reference key="1">
    <citation type="journal article" date="2006" name="Proc. Natl. Acad. Sci. U.S.A.">
        <title>Comparative genomics of the lactic acid bacteria.</title>
        <authorList>
            <person name="Makarova K.S."/>
            <person name="Slesarev A."/>
            <person name="Wolf Y.I."/>
            <person name="Sorokin A."/>
            <person name="Mirkin B."/>
            <person name="Koonin E.V."/>
            <person name="Pavlov A."/>
            <person name="Pavlova N."/>
            <person name="Karamychev V."/>
            <person name="Polouchine N."/>
            <person name="Shakhova V."/>
            <person name="Grigoriev I."/>
            <person name="Lou Y."/>
            <person name="Rohksar D."/>
            <person name="Lucas S."/>
            <person name="Huang K."/>
            <person name="Goodstein D.M."/>
            <person name="Hawkins T."/>
            <person name="Plengvidhya V."/>
            <person name="Welker D."/>
            <person name="Hughes J."/>
            <person name="Goh Y."/>
            <person name="Benson A."/>
            <person name="Baldwin K."/>
            <person name="Lee J.-H."/>
            <person name="Diaz-Muniz I."/>
            <person name="Dosti B."/>
            <person name="Smeianov V."/>
            <person name="Wechter W."/>
            <person name="Barabote R."/>
            <person name="Lorca G."/>
            <person name="Altermann E."/>
            <person name="Barrangou R."/>
            <person name="Ganesan B."/>
            <person name="Xie Y."/>
            <person name="Rawsthorne H."/>
            <person name="Tamir D."/>
            <person name="Parker C."/>
            <person name="Breidt F."/>
            <person name="Broadbent J.R."/>
            <person name="Hutkins R."/>
            <person name="O'Sullivan D."/>
            <person name="Steele J."/>
            <person name="Unlu G."/>
            <person name="Saier M.H. Jr."/>
            <person name="Klaenhammer T."/>
            <person name="Richardson P."/>
            <person name="Kozyavkin S."/>
            <person name="Weimer B.C."/>
            <person name="Mills D.A."/>
        </authorList>
    </citation>
    <scope>NUCLEOTIDE SEQUENCE [LARGE SCALE GENOMIC DNA]</scope>
    <source>
        <strain>ATCC BAA-331 / PSU-1</strain>
    </source>
</reference>
<evidence type="ECO:0000255" key="1">
    <source>
        <dbReference type="HAMAP-Rule" id="MF_00120"/>
    </source>
</evidence>
<organism>
    <name type="scientific">Oenococcus oeni (strain ATCC BAA-331 / PSU-1)</name>
    <dbReference type="NCBI Taxonomy" id="203123"/>
    <lineage>
        <taxon>Bacteria</taxon>
        <taxon>Bacillati</taxon>
        <taxon>Bacillota</taxon>
        <taxon>Bacilli</taxon>
        <taxon>Lactobacillales</taxon>
        <taxon>Lactobacillaceae</taxon>
        <taxon>Oenococcus</taxon>
    </lineage>
</organism>
<proteinExistence type="inferred from homology"/>
<comment type="function">
    <text evidence="1">Allows the formation of correctly charged Gln-tRNA(Gln) through the transamidation of misacylated Glu-tRNA(Gln) in organisms which lack glutaminyl-tRNA synthetase. The reaction takes place in the presence of glutamine and ATP through an activated gamma-phospho-Glu-tRNA(Gln).</text>
</comment>
<comment type="catalytic activity">
    <reaction evidence="1">
        <text>L-glutamyl-tRNA(Gln) + L-glutamine + ATP + H2O = L-glutaminyl-tRNA(Gln) + L-glutamate + ADP + phosphate + H(+)</text>
        <dbReference type="Rhea" id="RHEA:17521"/>
        <dbReference type="Rhea" id="RHEA-COMP:9681"/>
        <dbReference type="Rhea" id="RHEA-COMP:9684"/>
        <dbReference type="ChEBI" id="CHEBI:15377"/>
        <dbReference type="ChEBI" id="CHEBI:15378"/>
        <dbReference type="ChEBI" id="CHEBI:29985"/>
        <dbReference type="ChEBI" id="CHEBI:30616"/>
        <dbReference type="ChEBI" id="CHEBI:43474"/>
        <dbReference type="ChEBI" id="CHEBI:58359"/>
        <dbReference type="ChEBI" id="CHEBI:78520"/>
        <dbReference type="ChEBI" id="CHEBI:78521"/>
        <dbReference type="ChEBI" id="CHEBI:456216"/>
        <dbReference type="EC" id="6.3.5.7"/>
    </reaction>
</comment>
<comment type="subunit">
    <text evidence="1">Heterotrimer of A, B and C subunits.</text>
</comment>
<comment type="similarity">
    <text evidence="1">Belongs to the amidase family. GatA subfamily.</text>
</comment>
<dbReference type="EC" id="6.3.5.7" evidence="1"/>
<dbReference type="EMBL" id="CP000411">
    <property type="protein sequence ID" value="ABJ57541.1"/>
    <property type="molecule type" value="Genomic_DNA"/>
</dbReference>
<dbReference type="RefSeq" id="WP_002819526.1">
    <property type="nucleotide sequence ID" value="NC_008528.1"/>
</dbReference>
<dbReference type="SMR" id="Q04DD1"/>
<dbReference type="STRING" id="203123.OEOE_1694"/>
<dbReference type="GeneID" id="75066603"/>
<dbReference type="KEGG" id="ooe:OEOE_1694"/>
<dbReference type="eggNOG" id="COG0154">
    <property type="taxonomic scope" value="Bacteria"/>
</dbReference>
<dbReference type="HOGENOM" id="CLU_009600_0_3_9"/>
<dbReference type="Proteomes" id="UP000000774">
    <property type="component" value="Chromosome"/>
</dbReference>
<dbReference type="GO" id="GO:0030956">
    <property type="term" value="C:glutamyl-tRNA(Gln) amidotransferase complex"/>
    <property type="evidence" value="ECO:0007669"/>
    <property type="project" value="InterPro"/>
</dbReference>
<dbReference type="GO" id="GO:0005524">
    <property type="term" value="F:ATP binding"/>
    <property type="evidence" value="ECO:0007669"/>
    <property type="project" value="UniProtKB-KW"/>
</dbReference>
<dbReference type="GO" id="GO:0050567">
    <property type="term" value="F:glutaminyl-tRNA synthase (glutamine-hydrolyzing) activity"/>
    <property type="evidence" value="ECO:0007669"/>
    <property type="project" value="UniProtKB-UniRule"/>
</dbReference>
<dbReference type="GO" id="GO:0006412">
    <property type="term" value="P:translation"/>
    <property type="evidence" value="ECO:0007669"/>
    <property type="project" value="UniProtKB-UniRule"/>
</dbReference>
<dbReference type="Gene3D" id="3.90.1300.10">
    <property type="entry name" value="Amidase signature (AS) domain"/>
    <property type="match status" value="1"/>
</dbReference>
<dbReference type="HAMAP" id="MF_00120">
    <property type="entry name" value="GatA"/>
    <property type="match status" value="1"/>
</dbReference>
<dbReference type="InterPro" id="IPR000120">
    <property type="entry name" value="Amidase"/>
</dbReference>
<dbReference type="InterPro" id="IPR020556">
    <property type="entry name" value="Amidase_CS"/>
</dbReference>
<dbReference type="InterPro" id="IPR023631">
    <property type="entry name" value="Amidase_dom"/>
</dbReference>
<dbReference type="InterPro" id="IPR036928">
    <property type="entry name" value="AS_sf"/>
</dbReference>
<dbReference type="InterPro" id="IPR004412">
    <property type="entry name" value="GatA"/>
</dbReference>
<dbReference type="NCBIfam" id="TIGR00132">
    <property type="entry name" value="gatA"/>
    <property type="match status" value="1"/>
</dbReference>
<dbReference type="PANTHER" id="PTHR11895:SF151">
    <property type="entry name" value="GLUTAMYL-TRNA(GLN) AMIDOTRANSFERASE SUBUNIT A"/>
    <property type="match status" value="1"/>
</dbReference>
<dbReference type="PANTHER" id="PTHR11895">
    <property type="entry name" value="TRANSAMIDASE"/>
    <property type="match status" value="1"/>
</dbReference>
<dbReference type="Pfam" id="PF01425">
    <property type="entry name" value="Amidase"/>
    <property type="match status" value="1"/>
</dbReference>
<dbReference type="SUPFAM" id="SSF75304">
    <property type="entry name" value="Amidase signature (AS) enzymes"/>
    <property type="match status" value="1"/>
</dbReference>
<dbReference type="PROSITE" id="PS00571">
    <property type="entry name" value="AMIDASES"/>
    <property type="match status" value="1"/>
</dbReference>
<keyword id="KW-0067">ATP-binding</keyword>
<keyword id="KW-0436">Ligase</keyword>
<keyword id="KW-0547">Nucleotide-binding</keyword>
<keyword id="KW-0648">Protein biosynthesis</keyword>
<keyword id="KW-1185">Reference proteome</keyword>
<feature type="chain" id="PRO_1000015876" description="Glutamyl-tRNA(Gln) amidotransferase subunit A">
    <location>
        <begin position="1"/>
        <end position="487"/>
    </location>
</feature>
<feature type="active site" description="Charge relay system" evidence="1">
    <location>
        <position position="78"/>
    </location>
</feature>
<feature type="active site" description="Charge relay system" evidence="1">
    <location>
        <position position="153"/>
    </location>
</feature>
<feature type="active site" description="Acyl-ester intermediate" evidence="1">
    <location>
        <position position="177"/>
    </location>
</feature>
<protein>
    <recommendedName>
        <fullName evidence="1">Glutamyl-tRNA(Gln) amidotransferase subunit A</fullName>
        <shortName evidence="1">Glu-ADT subunit A</shortName>
        <ecNumber evidence="1">6.3.5.7</ecNumber>
    </recommendedName>
</protein>
<gene>
    <name evidence="1" type="primary">gatA</name>
    <name type="ordered locus">OEOE_1694</name>
</gene>
<sequence>MTDFFNENLTSLHKKLVDKEISATELTKEALNKSKSSQSEINAFITIDDEGALKRAAEIDAVGIDPDNILSGIPFAIKDNIVTKGLKTTAASHILDNFVPVYDATVIEKLNELGIVTIGKTNMDEFAMGGSTETSYFGKTANAWDHTKVPGGSSGGSASSVASGVIPVALGSDTGGSIRQPAAFNGIVGLKPTYGRVSRWGLIAFGSSLDQIGPLTRTVEDNARVLAAISGKDQRDTTTEDQSVPDFTKGIKKGVKDLRIGVPKEYFAKGIDEGVKDVVKKAIAKYESLGAKVDEVSLPHSKYGIAAYYILASSEASSNLERFDGIRYGFSARQDGQTLEDLYVRTRSEGFGDEVKRRIMLGTFALSAGFYDAYFKKAAQVRTLIVNDFAKVFENHDIILGPTTTSPAFDLGSENDDPVKMYMNDLLTIPLNLAGLPGMSINAGFTDGLPVGLQIIGKRFDESTIYKTAYAFEQDSQLFTKHPGVNF</sequence>